<comment type="function">
    <text evidence="1">Bidirectionally degrades single-stranded DNA into large acid-insoluble oligonucleotides, which are then degraded further into small acid-soluble oligonucleotides.</text>
</comment>
<comment type="catalytic activity">
    <reaction evidence="1">
        <text>Exonucleolytic cleavage in either 5'- to 3'- or 3'- to 5'-direction to yield nucleoside 5'-phosphates.</text>
        <dbReference type="EC" id="3.1.11.6"/>
    </reaction>
</comment>
<comment type="subunit">
    <text evidence="1">Heterooligomer composed of large and small subunits.</text>
</comment>
<comment type="subcellular location">
    <subcellularLocation>
        <location evidence="1">Cytoplasm</location>
    </subcellularLocation>
</comment>
<comment type="similarity">
    <text evidence="1">Belongs to the XseA family.</text>
</comment>
<proteinExistence type="inferred from homology"/>
<sequence>MIDNDIANQVPKEFSVSEISNKIKELIENNFGHIKVKGEISGLKISSSGHAYFNLKENTAILACTCWRPILVKIKFPLNDGMEVVIGGKLSSYSGNSRYQLSVDNLQPAGLGAMIQILNERKIRLEKEGLFNKKRIPIPFLPDKIGVITSITGAVIKDIIHRIRERCPTRIIIWQVSVQGENSSHEMAEAIEGFNNLEEIHKPSVIIVARGGGSIEDLWSFNDEILVRAAYNSKIPIISAVGHEADYTLIDLAVDKRAPTPTAAAEFAVPVRSILNNTIQSYEKILLNNTNRLIKYHEQSIVNYDKIHRYFAYYINNRQQLLDETGFNLLDVLIRCIALKETKLKSFAKERINYAKIINYKILELTHQTAYLLKSVNNTLKNFEYKLELNSTLLASLDYHNVLKRGFAIVTGDAGNFLSSKSTATNEQSLNIKFFDGEINVVLSSHDLNARSS</sequence>
<accession>Q68W63</accession>
<organism>
    <name type="scientific">Rickettsia typhi (strain ATCC VR-144 / Wilmington)</name>
    <dbReference type="NCBI Taxonomy" id="257363"/>
    <lineage>
        <taxon>Bacteria</taxon>
        <taxon>Pseudomonadati</taxon>
        <taxon>Pseudomonadota</taxon>
        <taxon>Alphaproteobacteria</taxon>
        <taxon>Rickettsiales</taxon>
        <taxon>Rickettsiaceae</taxon>
        <taxon>Rickettsieae</taxon>
        <taxon>Rickettsia</taxon>
        <taxon>typhus group</taxon>
    </lineage>
</organism>
<dbReference type="EC" id="3.1.11.6" evidence="1"/>
<dbReference type="EMBL" id="AE017197">
    <property type="protein sequence ID" value="AAU04129.1"/>
    <property type="molecule type" value="Genomic_DNA"/>
</dbReference>
<dbReference type="RefSeq" id="WP_011191106.1">
    <property type="nucleotide sequence ID" value="NC_006142.1"/>
</dbReference>
<dbReference type="SMR" id="Q68W63"/>
<dbReference type="KEGG" id="rty:RT0669"/>
<dbReference type="eggNOG" id="COG1570">
    <property type="taxonomic scope" value="Bacteria"/>
</dbReference>
<dbReference type="HOGENOM" id="CLU_023625_2_0_5"/>
<dbReference type="OrthoDB" id="9802795at2"/>
<dbReference type="Proteomes" id="UP000000604">
    <property type="component" value="Chromosome"/>
</dbReference>
<dbReference type="GO" id="GO:0005737">
    <property type="term" value="C:cytoplasm"/>
    <property type="evidence" value="ECO:0007669"/>
    <property type="project" value="UniProtKB-SubCell"/>
</dbReference>
<dbReference type="GO" id="GO:0009318">
    <property type="term" value="C:exodeoxyribonuclease VII complex"/>
    <property type="evidence" value="ECO:0007669"/>
    <property type="project" value="InterPro"/>
</dbReference>
<dbReference type="GO" id="GO:0008855">
    <property type="term" value="F:exodeoxyribonuclease VII activity"/>
    <property type="evidence" value="ECO:0007669"/>
    <property type="project" value="UniProtKB-UniRule"/>
</dbReference>
<dbReference type="GO" id="GO:0003676">
    <property type="term" value="F:nucleic acid binding"/>
    <property type="evidence" value="ECO:0007669"/>
    <property type="project" value="InterPro"/>
</dbReference>
<dbReference type="GO" id="GO:0006308">
    <property type="term" value="P:DNA catabolic process"/>
    <property type="evidence" value="ECO:0007669"/>
    <property type="project" value="UniProtKB-UniRule"/>
</dbReference>
<dbReference type="CDD" id="cd04489">
    <property type="entry name" value="ExoVII_LU_OBF"/>
    <property type="match status" value="1"/>
</dbReference>
<dbReference type="HAMAP" id="MF_00378">
    <property type="entry name" value="Exonuc_7_L"/>
    <property type="match status" value="1"/>
</dbReference>
<dbReference type="InterPro" id="IPR003753">
    <property type="entry name" value="Exonuc_VII_L"/>
</dbReference>
<dbReference type="InterPro" id="IPR020579">
    <property type="entry name" value="Exonuc_VII_lsu_C"/>
</dbReference>
<dbReference type="InterPro" id="IPR025824">
    <property type="entry name" value="OB-fold_nuc-bd_dom"/>
</dbReference>
<dbReference type="NCBIfam" id="TIGR00237">
    <property type="entry name" value="xseA"/>
    <property type="match status" value="1"/>
</dbReference>
<dbReference type="PANTHER" id="PTHR30008">
    <property type="entry name" value="EXODEOXYRIBONUCLEASE 7 LARGE SUBUNIT"/>
    <property type="match status" value="1"/>
</dbReference>
<dbReference type="PANTHER" id="PTHR30008:SF0">
    <property type="entry name" value="EXODEOXYRIBONUCLEASE 7 LARGE SUBUNIT"/>
    <property type="match status" value="1"/>
</dbReference>
<dbReference type="Pfam" id="PF02601">
    <property type="entry name" value="Exonuc_VII_L"/>
    <property type="match status" value="1"/>
</dbReference>
<dbReference type="Pfam" id="PF13742">
    <property type="entry name" value="tRNA_anti_2"/>
    <property type="match status" value="1"/>
</dbReference>
<evidence type="ECO:0000255" key="1">
    <source>
        <dbReference type="HAMAP-Rule" id="MF_00378"/>
    </source>
</evidence>
<name>EX7L_RICTY</name>
<reference key="1">
    <citation type="journal article" date="2004" name="J. Bacteriol.">
        <title>Complete genome sequence of Rickettsia typhi and comparison with sequences of other Rickettsiae.</title>
        <authorList>
            <person name="McLeod M.P."/>
            <person name="Qin X."/>
            <person name="Karpathy S.E."/>
            <person name="Gioia J."/>
            <person name="Highlander S.K."/>
            <person name="Fox G.E."/>
            <person name="McNeill T.Z."/>
            <person name="Jiang H."/>
            <person name="Muzny D."/>
            <person name="Jacob L.S."/>
            <person name="Hawes A.C."/>
            <person name="Sodergren E."/>
            <person name="Gill R."/>
            <person name="Hume J."/>
            <person name="Morgan M."/>
            <person name="Fan G."/>
            <person name="Amin A.G."/>
            <person name="Gibbs R.A."/>
            <person name="Hong C."/>
            <person name="Yu X.-J."/>
            <person name="Walker D.H."/>
            <person name="Weinstock G.M."/>
        </authorList>
    </citation>
    <scope>NUCLEOTIDE SEQUENCE [LARGE SCALE GENOMIC DNA]</scope>
    <source>
        <strain>ATCC VR-144 / Wilmington</strain>
    </source>
</reference>
<gene>
    <name evidence="1" type="primary">xseA</name>
    <name type="ordered locus">RT0669</name>
</gene>
<feature type="chain" id="PRO_0000273123" description="Exodeoxyribonuclease 7 large subunit">
    <location>
        <begin position="1"/>
        <end position="453"/>
    </location>
</feature>
<protein>
    <recommendedName>
        <fullName evidence="1">Exodeoxyribonuclease 7 large subunit</fullName>
        <ecNumber evidence="1">3.1.11.6</ecNumber>
    </recommendedName>
    <alternativeName>
        <fullName evidence="1">Exodeoxyribonuclease VII large subunit</fullName>
        <shortName evidence="1">Exonuclease VII large subunit</shortName>
    </alternativeName>
</protein>
<keyword id="KW-0963">Cytoplasm</keyword>
<keyword id="KW-0269">Exonuclease</keyword>
<keyword id="KW-0378">Hydrolase</keyword>
<keyword id="KW-0540">Nuclease</keyword>